<organism>
    <name type="scientific">Clostridium botulinum (strain ATCC 19397 / Type A)</name>
    <dbReference type="NCBI Taxonomy" id="441770"/>
    <lineage>
        <taxon>Bacteria</taxon>
        <taxon>Bacillati</taxon>
        <taxon>Bacillota</taxon>
        <taxon>Clostridia</taxon>
        <taxon>Eubacteriales</taxon>
        <taxon>Clostridiaceae</taxon>
        <taxon>Clostridium</taxon>
    </lineage>
</organism>
<dbReference type="EC" id="3.5.1.2" evidence="1"/>
<dbReference type="EMBL" id="CP000726">
    <property type="protein sequence ID" value="ABS32832.1"/>
    <property type="molecule type" value="Genomic_DNA"/>
</dbReference>
<dbReference type="RefSeq" id="WP_003399984.1">
    <property type="nucleotide sequence ID" value="NC_009697.1"/>
</dbReference>
<dbReference type="SMR" id="A7FX54"/>
<dbReference type="GeneID" id="5185637"/>
<dbReference type="KEGG" id="cba:CLB_2751"/>
<dbReference type="HOGENOM" id="CLU_027932_1_0_9"/>
<dbReference type="GO" id="GO:0004359">
    <property type="term" value="F:glutaminase activity"/>
    <property type="evidence" value="ECO:0007669"/>
    <property type="project" value="UniProtKB-UniRule"/>
</dbReference>
<dbReference type="GO" id="GO:0006537">
    <property type="term" value="P:glutamate biosynthetic process"/>
    <property type="evidence" value="ECO:0007669"/>
    <property type="project" value="TreeGrafter"/>
</dbReference>
<dbReference type="GO" id="GO:0006543">
    <property type="term" value="P:glutamine catabolic process"/>
    <property type="evidence" value="ECO:0007669"/>
    <property type="project" value="TreeGrafter"/>
</dbReference>
<dbReference type="FunFam" id="3.40.710.10:FF:000005">
    <property type="entry name" value="Glutaminase"/>
    <property type="match status" value="1"/>
</dbReference>
<dbReference type="Gene3D" id="3.40.710.10">
    <property type="entry name" value="DD-peptidase/beta-lactamase superfamily"/>
    <property type="match status" value="1"/>
</dbReference>
<dbReference type="HAMAP" id="MF_00313">
    <property type="entry name" value="Glutaminase"/>
    <property type="match status" value="1"/>
</dbReference>
<dbReference type="InterPro" id="IPR012338">
    <property type="entry name" value="Beta-lactam/transpept-like"/>
</dbReference>
<dbReference type="InterPro" id="IPR015868">
    <property type="entry name" value="Glutaminase"/>
</dbReference>
<dbReference type="NCBIfam" id="TIGR03814">
    <property type="entry name" value="Gln_ase"/>
    <property type="match status" value="1"/>
</dbReference>
<dbReference type="PANTHER" id="PTHR12544">
    <property type="entry name" value="GLUTAMINASE"/>
    <property type="match status" value="1"/>
</dbReference>
<dbReference type="PANTHER" id="PTHR12544:SF29">
    <property type="entry name" value="GLUTAMINASE"/>
    <property type="match status" value="1"/>
</dbReference>
<dbReference type="Pfam" id="PF04960">
    <property type="entry name" value="Glutaminase"/>
    <property type="match status" value="1"/>
</dbReference>
<dbReference type="SUPFAM" id="SSF56601">
    <property type="entry name" value="beta-lactamase/transpeptidase-like"/>
    <property type="match status" value="1"/>
</dbReference>
<accession>A7FX54</accession>
<proteinExistence type="inferred from homology"/>
<comment type="catalytic activity">
    <reaction evidence="1">
        <text>L-glutamine + H2O = L-glutamate + NH4(+)</text>
        <dbReference type="Rhea" id="RHEA:15889"/>
        <dbReference type="ChEBI" id="CHEBI:15377"/>
        <dbReference type="ChEBI" id="CHEBI:28938"/>
        <dbReference type="ChEBI" id="CHEBI:29985"/>
        <dbReference type="ChEBI" id="CHEBI:58359"/>
        <dbReference type="EC" id="3.5.1.2"/>
    </reaction>
</comment>
<comment type="subunit">
    <text evidence="1">Homotetramer.</text>
</comment>
<comment type="similarity">
    <text evidence="1">Belongs to the glutaminase family.</text>
</comment>
<evidence type="ECO:0000255" key="1">
    <source>
        <dbReference type="HAMAP-Rule" id="MF_00313"/>
    </source>
</evidence>
<reference key="1">
    <citation type="journal article" date="2007" name="PLoS ONE">
        <title>Analysis of the neurotoxin complex genes in Clostridium botulinum A1-A4 and B1 strains: BoNT/A3, /Ba4 and /B1 clusters are located within plasmids.</title>
        <authorList>
            <person name="Smith T.J."/>
            <person name="Hill K.K."/>
            <person name="Foley B.T."/>
            <person name="Detter J.C."/>
            <person name="Munk A.C."/>
            <person name="Bruce D.C."/>
            <person name="Doggett N.A."/>
            <person name="Smith L.A."/>
            <person name="Marks J.D."/>
            <person name="Xie G."/>
            <person name="Brettin T.S."/>
        </authorList>
    </citation>
    <scope>NUCLEOTIDE SEQUENCE [LARGE SCALE GENOMIC DNA]</scope>
    <source>
        <strain>ATCC 19397 / Type A</strain>
    </source>
</reference>
<sequence>MNRLLKTIIENNRKWISEGKVASYIPELSKMDKNLLGISVCTLGGEEYWEGDAEVKFTIQSISKIVTLMLAIIDNGEDYVFSKVGMEPTETAFNSIVNLEAKESHKPINPMINAGAIVVASMVAGKDSDEKFDRILKFTRKISGNNDIDINLNVYESEKETGHRNRALAYFMKSTGALKGNVEEILDVYFKQCSIEITCKDLARIGVMLANDGVSPYTGDRIVPRHVARIVKTIMVTCGMYDASGNFAVHIGIPAKSGVGGGIIACAPRRMGIGVLGTALDEKGNSIAGTKILEELSKQLDLSIF</sequence>
<protein>
    <recommendedName>
        <fullName evidence="1">Glutaminase</fullName>
        <ecNumber evidence="1">3.5.1.2</ecNumber>
    </recommendedName>
</protein>
<name>GLSA_CLOB1</name>
<feature type="chain" id="PRO_1000048330" description="Glutaminase">
    <location>
        <begin position="1"/>
        <end position="305"/>
    </location>
</feature>
<feature type="binding site" evidence="1">
    <location>
        <position position="61"/>
    </location>
    <ligand>
        <name>substrate</name>
    </ligand>
</feature>
<feature type="binding site" evidence="1">
    <location>
        <position position="113"/>
    </location>
    <ligand>
        <name>substrate</name>
    </ligand>
</feature>
<feature type="binding site" evidence="1">
    <location>
        <position position="158"/>
    </location>
    <ligand>
        <name>substrate</name>
    </ligand>
</feature>
<feature type="binding site" evidence="1">
    <location>
        <position position="165"/>
    </location>
    <ligand>
        <name>substrate</name>
    </ligand>
</feature>
<feature type="binding site" evidence="1">
    <location>
        <position position="189"/>
    </location>
    <ligand>
        <name>substrate</name>
    </ligand>
</feature>
<feature type="binding site" evidence="1">
    <location>
        <position position="241"/>
    </location>
    <ligand>
        <name>substrate</name>
    </ligand>
</feature>
<feature type="binding site" evidence="1">
    <location>
        <position position="259"/>
    </location>
    <ligand>
        <name>substrate</name>
    </ligand>
</feature>
<gene>
    <name evidence="1" type="primary">glsA</name>
    <name type="ordered locus">CLB_2751</name>
</gene>
<keyword id="KW-0378">Hydrolase</keyword>